<sequence length="304" mass="32554">MQNFGKVAVLMGGFSSEREISLDSGTAILNALKSKGIDAYAFDPKETPLSELKAQGFQTAFNILHGTYGEDGAVQGALELLGIPYTGSGVAASAIGMDKYRCKLIWQALGLPVPEFAVLHDDTDFDAVEEKLGLPMFVKPAAEGSSVGVVKVKGKGRLKSVYEELKHLQGEIIAERFIGGGEYSCPVLNGKGLPGIHIIPATEFYDYEAKYNRDDTIYQCPSEDLTEAEESLMRELAVRGAQAIGAEGCVRVDFLKDTDGKLYLLEINTLPGMTSHSLVPKSAAVTGVGFADLCIEILKTAHVG</sequence>
<dbReference type="EC" id="6.3.2.4" evidence="2"/>
<dbReference type="EMBL" id="AE002098">
    <property type="protein sequence ID" value="AAF40862.1"/>
    <property type="molecule type" value="Genomic_DNA"/>
</dbReference>
<dbReference type="PIR" id="C81201">
    <property type="entry name" value="C81201"/>
</dbReference>
<dbReference type="RefSeq" id="NP_273472.1">
    <property type="nucleotide sequence ID" value="NC_003112.2"/>
</dbReference>
<dbReference type="RefSeq" id="WP_002223420.1">
    <property type="nucleotide sequence ID" value="NC_003112.2"/>
</dbReference>
<dbReference type="SMR" id="Q9K0Y0"/>
<dbReference type="FunCoup" id="Q9K0Y0">
    <property type="interactions" value="288"/>
</dbReference>
<dbReference type="STRING" id="122586.NMB0424"/>
<dbReference type="PaxDb" id="122586-NMB0424"/>
<dbReference type="KEGG" id="nme:NMB0424"/>
<dbReference type="PATRIC" id="fig|122586.8.peg.538"/>
<dbReference type="HOGENOM" id="CLU_039268_1_2_4"/>
<dbReference type="InParanoid" id="Q9K0Y0"/>
<dbReference type="OrthoDB" id="9813261at2"/>
<dbReference type="UniPathway" id="UPA00219"/>
<dbReference type="Proteomes" id="UP000000425">
    <property type="component" value="Chromosome"/>
</dbReference>
<dbReference type="GO" id="GO:0005737">
    <property type="term" value="C:cytoplasm"/>
    <property type="evidence" value="ECO:0007669"/>
    <property type="project" value="UniProtKB-SubCell"/>
</dbReference>
<dbReference type="GO" id="GO:0005524">
    <property type="term" value="F:ATP binding"/>
    <property type="evidence" value="ECO:0007669"/>
    <property type="project" value="UniProtKB-KW"/>
</dbReference>
<dbReference type="GO" id="GO:0008716">
    <property type="term" value="F:D-alanine-D-alanine ligase activity"/>
    <property type="evidence" value="ECO:0000318"/>
    <property type="project" value="GO_Central"/>
</dbReference>
<dbReference type="GO" id="GO:0046872">
    <property type="term" value="F:metal ion binding"/>
    <property type="evidence" value="ECO:0007669"/>
    <property type="project" value="UniProtKB-KW"/>
</dbReference>
<dbReference type="GO" id="GO:0071555">
    <property type="term" value="P:cell wall organization"/>
    <property type="evidence" value="ECO:0007669"/>
    <property type="project" value="UniProtKB-KW"/>
</dbReference>
<dbReference type="GO" id="GO:0009252">
    <property type="term" value="P:peptidoglycan biosynthetic process"/>
    <property type="evidence" value="ECO:0007669"/>
    <property type="project" value="UniProtKB-UniRule"/>
</dbReference>
<dbReference type="GO" id="GO:0008360">
    <property type="term" value="P:regulation of cell shape"/>
    <property type="evidence" value="ECO:0007669"/>
    <property type="project" value="UniProtKB-KW"/>
</dbReference>
<dbReference type="FunFam" id="3.30.1490.20:FF:000023">
    <property type="entry name" value="D-alanine--D-alanine ligase"/>
    <property type="match status" value="1"/>
</dbReference>
<dbReference type="FunFam" id="3.30.470.20:FF:000008">
    <property type="entry name" value="D-alanine--D-alanine ligase"/>
    <property type="match status" value="1"/>
</dbReference>
<dbReference type="FunFam" id="3.40.50.20:FF:000013">
    <property type="entry name" value="D-alanine--D-alanine ligase"/>
    <property type="match status" value="1"/>
</dbReference>
<dbReference type="Gene3D" id="3.40.50.20">
    <property type="match status" value="1"/>
</dbReference>
<dbReference type="Gene3D" id="3.30.1490.20">
    <property type="entry name" value="ATP-grasp fold, A domain"/>
    <property type="match status" value="1"/>
</dbReference>
<dbReference type="Gene3D" id="3.30.470.20">
    <property type="entry name" value="ATP-grasp fold, B domain"/>
    <property type="match status" value="1"/>
</dbReference>
<dbReference type="HAMAP" id="MF_00047">
    <property type="entry name" value="Dala_Dala_lig"/>
    <property type="match status" value="1"/>
</dbReference>
<dbReference type="InterPro" id="IPR011761">
    <property type="entry name" value="ATP-grasp"/>
</dbReference>
<dbReference type="InterPro" id="IPR013815">
    <property type="entry name" value="ATP_grasp_subdomain_1"/>
</dbReference>
<dbReference type="InterPro" id="IPR000291">
    <property type="entry name" value="D-Ala_lig_Van_CS"/>
</dbReference>
<dbReference type="InterPro" id="IPR005905">
    <property type="entry name" value="D_ala_D_ala"/>
</dbReference>
<dbReference type="InterPro" id="IPR011095">
    <property type="entry name" value="Dala_Dala_lig_C"/>
</dbReference>
<dbReference type="InterPro" id="IPR011127">
    <property type="entry name" value="Dala_Dala_lig_N"/>
</dbReference>
<dbReference type="InterPro" id="IPR016185">
    <property type="entry name" value="PreATP-grasp_dom_sf"/>
</dbReference>
<dbReference type="NCBIfam" id="TIGR01205">
    <property type="entry name" value="D_ala_D_alaTIGR"/>
    <property type="match status" value="1"/>
</dbReference>
<dbReference type="NCBIfam" id="NF002378">
    <property type="entry name" value="PRK01372.1"/>
    <property type="match status" value="1"/>
</dbReference>
<dbReference type="PANTHER" id="PTHR23132">
    <property type="entry name" value="D-ALANINE--D-ALANINE LIGASE"/>
    <property type="match status" value="1"/>
</dbReference>
<dbReference type="PANTHER" id="PTHR23132:SF23">
    <property type="entry name" value="D-ALANINE--D-ALANINE LIGASE B"/>
    <property type="match status" value="1"/>
</dbReference>
<dbReference type="Pfam" id="PF07478">
    <property type="entry name" value="Dala_Dala_lig_C"/>
    <property type="match status" value="1"/>
</dbReference>
<dbReference type="Pfam" id="PF01820">
    <property type="entry name" value="Dala_Dala_lig_N"/>
    <property type="match status" value="1"/>
</dbReference>
<dbReference type="PIRSF" id="PIRSF039102">
    <property type="entry name" value="Ddl/VanB"/>
    <property type="match status" value="1"/>
</dbReference>
<dbReference type="SUPFAM" id="SSF56059">
    <property type="entry name" value="Glutathione synthetase ATP-binding domain-like"/>
    <property type="match status" value="1"/>
</dbReference>
<dbReference type="SUPFAM" id="SSF52440">
    <property type="entry name" value="PreATP-grasp domain"/>
    <property type="match status" value="1"/>
</dbReference>
<dbReference type="PROSITE" id="PS50975">
    <property type="entry name" value="ATP_GRASP"/>
    <property type="match status" value="1"/>
</dbReference>
<dbReference type="PROSITE" id="PS00843">
    <property type="entry name" value="DALA_DALA_LIGASE_1"/>
    <property type="match status" value="1"/>
</dbReference>
<dbReference type="PROSITE" id="PS00844">
    <property type="entry name" value="DALA_DALA_LIGASE_2"/>
    <property type="match status" value="1"/>
</dbReference>
<accession>Q9K0Y0</accession>
<keyword id="KW-0067">ATP-binding</keyword>
<keyword id="KW-0133">Cell shape</keyword>
<keyword id="KW-0961">Cell wall biogenesis/degradation</keyword>
<keyword id="KW-0963">Cytoplasm</keyword>
<keyword id="KW-0436">Ligase</keyword>
<keyword id="KW-0460">Magnesium</keyword>
<keyword id="KW-0464">Manganese</keyword>
<keyword id="KW-0479">Metal-binding</keyword>
<keyword id="KW-0547">Nucleotide-binding</keyword>
<keyword id="KW-0573">Peptidoglycan synthesis</keyword>
<keyword id="KW-1185">Reference proteome</keyword>
<proteinExistence type="inferred from homology"/>
<comment type="function">
    <text evidence="2">Cell wall formation.</text>
</comment>
<comment type="catalytic activity">
    <reaction evidence="2">
        <text>2 D-alanine + ATP = D-alanyl-D-alanine + ADP + phosphate + H(+)</text>
        <dbReference type="Rhea" id="RHEA:11224"/>
        <dbReference type="ChEBI" id="CHEBI:15378"/>
        <dbReference type="ChEBI" id="CHEBI:30616"/>
        <dbReference type="ChEBI" id="CHEBI:43474"/>
        <dbReference type="ChEBI" id="CHEBI:57416"/>
        <dbReference type="ChEBI" id="CHEBI:57822"/>
        <dbReference type="ChEBI" id="CHEBI:456216"/>
        <dbReference type="EC" id="6.3.2.4"/>
    </reaction>
</comment>
<comment type="cofactor">
    <cofactor evidence="1">
        <name>Mg(2+)</name>
        <dbReference type="ChEBI" id="CHEBI:18420"/>
    </cofactor>
    <cofactor evidence="1">
        <name>Mn(2+)</name>
        <dbReference type="ChEBI" id="CHEBI:29035"/>
    </cofactor>
    <text evidence="1">Binds 2 magnesium or manganese ions per subunit.</text>
</comment>
<comment type="pathway">
    <text evidence="2">Cell wall biogenesis; peptidoglycan biosynthesis.</text>
</comment>
<comment type="subcellular location">
    <subcellularLocation>
        <location evidence="2">Cytoplasm</location>
    </subcellularLocation>
</comment>
<comment type="similarity">
    <text evidence="2">Belongs to the D-alanine--D-alanine ligase family.</text>
</comment>
<feature type="chain" id="PRO_0000177846" description="D-alanine--D-alanine ligase">
    <location>
        <begin position="1"/>
        <end position="304"/>
    </location>
</feature>
<feature type="domain" description="ATP-grasp" evidence="2">
    <location>
        <begin position="103"/>
        <end position="299"/>
    </location>
</feature>
<feature type="binding site" evidence="2">
    <location>
        <begin position="129"/>
        <end position="184"/>
    </location>
    <ligand>
        <name>ATP</name>
        <dbReference type="ChEBI" id="CHEBI:30616"/>
    </ligand>
</feature>
<feature type="binding site" evidence="2">
    <location>
        <position position="253"/>
    </location>
    <ligand>
        <name>Mg(2+)</name>
        <dbReference type="ChEBI" id="CHEBI:18420"/>
        <label>1</label>
    </ligand>
</feature>
<feature type="binding site" evidence="2">
    <location>
        <position position="266"/>
    </location>
    <ligand>
        <name>Mg(2+)</name>
        <dbReference type="ChEBI" id="CHEBI:18420"/>
        <label>1</label>
    </ligand>
</feature>
<feature type="binding site" evidence="2">
    <location>
        <position position="266"/>
    </location>
    <ligand>
        <name>Mg(2+)</name>
        <dbReference type="ChEBI" id="CHEBI:18420"/>
        <label>2</label>
    </ligand>
</feature>
<feature type="binding site" evidence="2">
    <location>
        <position position="268"/>
    </location>
    <ligand>
        <name>Mg(2+)</name>
        <dbReference type="ChEBI" id="CHEBI:18420"/>
        <label>2</label>
    </ligand>
</feature>
<protein>
    <recommendedName>
        <fullName evidence="2">D-alanine--D-alanine ligase</fullName>
        <ecNumber evidence="2">6.3.2.4</ecNumber>
    </recommendedName>
    <alternativeName>
        <fullName evidence="2">D-Ala-D-Ala ligase</fullName>
    </alternativeName>
    <alternativeName>
        <fullName evidence="2">D-alanylalanine synthetase</fullName>
    </alternativeName>
</protein>
<name>DDL_NEIMB</name>
<evidence type="ECO:0000250" key="1"/>
<evidence type="ECO:0000255" key="2">
    <source>
        <dbReference type="HAMAP-Rule" id="MF_00047"/>
    </source>
</evidence>
<reference key="1">
    <citation type="journal article" date="2000" name="Science">
        <title>Complete genome sequence of Neisseria meningitidis serogroup B strain MC58.</title>
        <authorList>
            <person name="Tettelin H."/>
            <person name="Saunders N.J."/>
            <person name="Heidelberg J.F."/>
            <person name="Jeffries A.C."/>
            <person name="Nelson K.E."/>
            <person name="Eisen J.A."/>
            <person name="Ketchum K.A."/>
            <person name="Hood D.W."/>
            <person name="Peden J.F."/>
            <person name="Dodson R.J."/>
            <person name="Nelson W.C."/>
            <person name="Gwinn M.L."/>
            <person name="DeBoy R.T."/>
            <person name="Peterson J.D."/>
            <person name="Hickey E.K."/>
            <person name="Haft D.H."/>
            <person name="Salzberg S.L."/>
            <person name="White O."/>
            <person name="Fleischmann R.D."/>
            <person name="Dougherty B.A."/>
            <person name="Mason T.M."/>
            <person name="Ciecko A."/>
            <person name="Parksey D.S."/>
            <person name="Blair E."/>
            <person name="Cittone H."/>
            <person name="Clark E.B."/>
            <person name="Cotton M.D."/>
            <person name="Utterback T.R."/>
            <person name="Khouri H.M."/>
            <person name="Qin H."/>
            <person name="Vamathevan J.J."/>
            <person name="Gill J."/>
            <person name="Scarlato V."/>
            <person name="Masignani V."/>
            <person name="Pizza M."/>
            <person name="Grandi G."/>
            <person name="Sun L."/>
            <person name="Smith H.O."/>
            <person name="Fraser C.M."/>
            <person name="Moxon E.R."/>
            <person name="Rappuoli R."/>
            <person name="Venter J.C."/>
        </authorList>
    </citation>
    <scope>NUCLEOTIDE SEQUENCE [LARGE SCALE GENOMIC DNA]</scope>
    <source>
        <strain>ATCC BAA-335 / MC58</strain>
    </source>
</reference>
<organism>
    <name type="scientific">Neisseria meningitidis serogroup B (strain ATCC BAA-335 / MC58)</name>
    <dbReference type="NCBI Taxonomy" id="122586"/>
    <lineage>
        <taxon>Bacteria</taxon>
        <taxon>Pseudomonadati</taxon>
        <taxon>Pseudomonadota</taxon>
        <taxon>Betaproteobacteria</taxon>
        <taxon>Neisseriales</taxon>
        <taxon>Neisseriaceae</taxon>
        <taxon>Neisseria</taxon>
    </lineage>
</organism>
<gene>
    <name evidence="2" type="primary">ddl</name>
    <name type="ordered locus">NMB0424</name>
</gene>